<dbReference type="EC" id="3.1.-.-"/>
<dbReference type="EMBL" id="BC090331">
    <property type="protein sequence ID" value="AAH90331.1"/>
    <property type="molecule type" value="mRNA"/>
</dbReference>
<dbReference type="RefSeq" id="NP_001012762.1">
    <property type="nucleotide sequence ID" value="NM_001012744.1"/>
</dbReference>
<dbReference type="RefSeq" id="XP_006244669.1">
    <property type="nucleotide sequence ID" value="XM_006244607.5"/>
</dbReference>
<dbReference type="SMR" id="P84039"/>
<dbReference type="FunCoup" id="P84039">
    <property type="interactions" value="820"/>
</dbReference>
<dbReference type="STRING" id="10116.ENSRNOP00000013703"/>
<dbReference type="GlyCosmos" id="P84039">
    <property type="glycosylation" value="8 sites, No reported glycans"/>
</dbReference>
<dbReference type="GlyGen" id="P84039">
    <property type="glycosylation" value="8 sites"/>
</dbReference>
<dbReference type="iPTMnet" id="P84039"/>
<dbReference type="PhosphoSitePlus" id="P84039"/>
<dbReference type="jPOST" id="P84039"/>
<dbReference type="PaxDb" id="10116-ENSRNOP00000013703"/>
<dbReference type="Ensembl" id="ENSRNOT00000013703.7">
    <property type="protein sequence ID" value="ENSRNOP00000013703.4"/>
    <property type="gene ID" value="ENSRNOG00000010232.8"/>
</dbReference>
<dbReference type="GeneID" id="316249"/>
<dbReference type="KEGG" id="rno:316249"/>
<dbReference type="UCSC" id="RGD:1359199">
    <property type="organism name" value="rat"/>
</dbReference>
<dbReference type="AGR" id="RGD:1359199"/>
<dbReference type="CTD" id="59084"/>
<dbReference type="RGD" id="1359199">
    <property type="gene designation" value="Enpp5"/>
</dbReference>
<dbReference type="eggNOG" id="KOG2645">
    <property type="taxonomic scope" value="Eukaryota"/>
</dbReference>
<dbReference type="GeneTree" id="ENSGT00940000160562"/>
<dbReference type="HOGENOM" id="CLU_017594_1_2_1"/>
<dbReference type="InParanoid" id="P84039"/>
<dbReference type="OMA" id="DEYVSRD"/>
<dbReference type="OrthoDB" id="415411at2759"/>
<dbReference type="PhylomeDB" id="P84039"/>
<dbReference type="TreeFam" id="TF330032"/>
<dbReference type="PRO" id="PR:P84039"/>
<dbReference type="Proteomes" id="UP000002494">
    <property type="component" value="Chromosome 9"/>
</dbReference>
<dbReference type="Bgee" id="ENSRNOG00000010232">
    <property type="expression patterns" value="Expressed in Ammon's horn and 19 other cell types or tissues"/>
</dbReference>
<dbReference type="GO" id="GO:0005886">
    <property type="term" value="C:plasma membrane"/>
    <property type="evidence" value="ECO:0000314"/>
    <property type="project" value="UniProtKB"/>
</dbReference>
<dbReference type="GO" id="GO:0000210">
    <property type="term" value="F:NAD+ diphosphatase activity"/>
    <property type="evidence" value="ECO:0000266"/>
    <property type="project" value="RGD"/>
</dbReference>
<dbReference type="GO" id="GO:0008270">
    <property type="term" value="F:zinc ion binding"/>
    <property type="evidence" value="ECO:0000266"/>
    <property type="project" value="RGD"/>
</dbReference>
<dbReference type="GO" id="GO:0007154">
    <property type="term" value="P:cell communication"/>
    <property type="evidence" value="ECO:0000314"/>
    <property type="project" value="UniProtKB"/>
</dbReference>
<dbReference type="CDD" id="cd16018">
    <property type="entry name" value="Enpp"/>
    <property type="match status" value="1"/>
</dbReference>
<dbReference type="FunFam" id="3.30.1360.180:FF:000004">
    <property type="entry name" value="Ectonucleotide pyrophosphatase/phosphodiesterase family member 4"/>
    <property type="match status" value="1"/>
</dbReference>
<dbReference type="Gene3D" id="3.30.1360.180">
    <property type="match status" value="1"/>
</dbReference>
<dbReference type="Gene3D" id="3.40.720.10">
    <property type="entry name" value="Alkaline Phosphatase, subunit A"/>
    <property type="match status" value="1"/>
</dbReference>
<dbReference type="InterPro" id="IPR017850">
    <property type="entry name" value="Alkaline_phosphatase_core_sf"/>
</dbReference>
<dbReference type="InterPro" id="IPR002591">
    <property type="entry name" value="Phosphodiest/P_Trfase"/>
</dbReference>
<dbReference type="PANTHER" id="PTHR10151">
    <property type="entry name" value="ECTONUCLEOTIDE PYROPHOSPHATASE/PHOSPHODIESTERASE"/>
    <property type="match status" value="1"/>
</dbReference>
<dbReference type="PANTHER" id="PTHR10151:SF125">
    <property type="entry name" value="ECTONUCLEOTIDE PYROPHOSPHATASE_PHOSPHODIESTERASE FAMILY MEMBER 5"/>
    <property type="match status" value="1"/>
</dbReference>
<dbReference type="Pfam" id="PF01663">
    <property type="entry name" value="Phosphodiest"/>
    <property type="match status" value="1"/>
</dbReference>
<dbReference type="SUPFAM" id="SSF53649">
    <property type="entry name" value="Alkaline phosphatase-like"/>
    <property type="match status" value="1"/>
</dbReference>
<accession>P84039</accession>
<accession>Q5EAN9</accession>
<comment type="function">
    <text evidence="1 3 4">Can hydrolyze NAD but cannot hydrolyze nucleotide di- and triphosphates (By similarity). May play a role in neuronal cell communication. Lacks nucleotide pyrophosphatase and lysopholipase D activity in vitro (PubMed:12927778).</text>
</comment>
<comment type="cofactor">
    <cofactor evidence="1">
        <name>Zn(2+)</name>
        <dbReference type="ChEBI" id="CHEBI:29105"/>
    </cofactor>
    <text evidence="1">Binds 2 Zn(2+) ions per subunit.</text>
</comment>
<comment type="subcellular location">
    <subcellularLocation>
        <location evidence="5">Membrane</location>
        <topology evidence="5">Single-pass membrane protein</topology>
    </subcellularLocation>
</comment>
<comment type="tissue specificity">
    <text evidence="3">Brain.</text>
</comment>
<comment type="PTM">
    <text evidence="3">N-glycosylated.</text>
</comment>
<comment type="similarity">
    <text evidence="5">Belongs to the nucleotide pyrophosphatase/phosphodiesterase family.</text>
</comment>
<evidence type="ECO:0000250" key="1">
    <source>
        <dbReference type="UniProtKB" id="Q9EQG7"/>
    </source>
</evidence>
<evidence type="ECO:0000255" key="2"/>
<evidence type="ECO:0000269" key="3">
    <source>
    </source>
</evidence>
<evidence type="ECO:0000303" key="4">
    <source>
    </source>
</evidence>
<evidence type="ECO:0000305" key="5"/>
<evidence type="ECO:0000305" key="6">
    <source>
    </source>
</evidence>
<feature type="signal peptide" evidence="3">
    <location>
        <begin position="1"/>
        <end position="24"/>
    </location>
</feature>
<feature type="chain" id="PRO_0000188572" description="Ectonucleotide pyrophosphatase/phosphodiesterase family member 5">
    <location>
        <begin position="25"/>
        <end position="477"/>
    </location>
</feature>
<feature type="transmembrane region" description="Helical" evidence="5">
    <location>
        <begin position="432"/>
        <end position="452"/>
    </location>
</feature>
<feature type="active site" description="Nucleophile" evidence="2">
    <location>
        <position position="72"/>
    </location>
</feature>
<feature type="binding site" evidence="1">
    <location>
        <position position="36"/>
    </location>
    <ligand>
        <name>Zn(2+)</name>
        <dbReference type="ChEBI" id="CHEBI:29105"/>
        <label>1</label>
        <note>catalytic</note>
    </ligand>
</feature>
<feature type="binding site" evidence="1">
    <location>
        <position position="72"/>
    </location>
    <ligand>
        <name>Zn(2+)</name>
        <dbReference type="ChEBI" id="CHEBI:29105"/>
        <label>1</label>
        <note>catalytic</note>
    </ligand>
</feature>
<feature type="binding site" evidence="1">
    <location>
        <position position="191"/>
    </location>
    <ligand>
        <name>Zn(2+)</name>
        <dbReference type="ChEBI" id="CHEBI:29105"/>
        <label>2</label>
        <note>catalytic</note>
    </ligand>
</feature>
<feature type="binding site" evidence="1">
    <location>
        <position position="195"/>
    </location>
    <ligand>
        <name>Zn(2+)</name>
        <dbReference type="ChEBI" id="CHEBI:29105"/>
        <label>2</label>
        <note>catalytic</note>
    </ligand>
</feature>
<feature type="binding site" evidence="1">
    <location>
        <position position="238"/>
    </location>
    <ligand>
        <name>Zn(2+)</name>
        <dbReference type="ChEBI" id="CHEBI:29105"/>
        <label>1</label>
        <note>catalytic</note>
    </ligand>
</feature>
<feature type="binding site" evidence="1">
    <location>
        <position position="239"/>
    </location>
    <ligand>
        <name>Zn(2+)</name>
        <dbReference type="ChEBI" id="CHEBI:29105"/>
        <label>1</label>
        <note>catalytic</note>
    </ligand>
</feature>
<feature type="binding site" evidence="1">
    <location>
        <position position="339"/>
    </location>
    <ligand>
        <name>Zn(2+)</name>
        <dbReference type="ChEBI" id="CHEBI:29105"/>
        <label>2</label>
        <note>catalytic</note>
    </ligand>
</feature>
<feature type="glycosylation site" description="N-linked (GlcNAc...) asparagine" evidence="6">
    <location>
        <position position="101"/>
    </location>
</feature>
<feature type="glycosylation site" description="N-linked (GlcNAc...) asparagine" evidence="6">
    <location>
        <position position="158"/>
    </location>
</feature>
<feature type="glycosylation site" description="N-linked (GlcNAc...) asparagine" evidence="6">
    <location>
        <position position="292"/>
    </location>
</feature>
<feature type="glycosylation site" description="N-linked (GlcNAc...) asparagine" evidence="6">
    <location>
        <position position="329"/>
    </location>
</feature>
<feature type="glycosylation site" description="N-linked (GlcNAc...) asparagine" evidence="6">
    <location>
        <position position="362"/>
    </location>
</feature>
<feature type="glycosylation site" description="N-linked (GlcNAc...) asparagine" evidence="6">
    <location>
        <position position="369"/>
    </location>
</feature>
<feature type="glycosylation site" description="N-linked (GlcNAc...) asparagine" evidence="6">
    <location>
        <position position="382"/>
    </location>
</feature>
<feature type="glycosylation site" description="N-linked (GlcNAc...) asparagine" evidence="6">
    <location>
        <position position="389"/>
    </location>
</feature>
<feature type="sequence conflict" description="In Ref. 2; AA sequence." evidence="5" ref="2">
    <original>D</original>
    <variation>G</variation>
    <location>
        <position position="41"/>
    </location>
</feature>
<name>ENPP5_RAT</name>
<protein>
    <recommendedName>
        <fullName>Ectonucleotide pyrophosphatase/phosphodiesterase family member 5</fullName>
        <shortName>E-NPP 5</shortName>
        <shortName>NPP-5</shortName>
        <ecNumber>3.1.-.-</ecNumber>
    </recommendedName>
</protein>
<reference key="1">
    <citation type="journal article" date="2004" name="Genome Res.">
        <title>The status, quality, and expansion of the NIH full-length cDNA project: the Mammalian Gene Collection (MGC).</title>
        <authorList>
            <consortium name="The MGC Project Team"/>
        </authorList>
    </citation>
    <scope>NUCLEOTIDE SEQUENCE [LARGE SCALE MRNA]</scope>
    <source>
        <tissue>Ovary</tissue>
    </source>
</reference>
<reference evidence="5" key="2">
    <citation type="journal article" date="2003" name="Biochem. Biophys. Res. Commun.">
        <title>Characterization of nucleotide pyrophosphatase-5 as an oligomannosidic glycoprotein in rat brain.</title>
        <authorList>
            <person name="Ohe Y."/>
            <person name="Ohnishi H."/>
            <person name="Okazawa H."/>
            <person name="Tomizawa K."/>
            <person name="Kobayashi H."/>
            <person name="Okawa K."/>
            <person name="Matozaki T."/>
        </authorList>
    </citation>
    <scope>PROTEIN SEQUENCE OF 25-42</scope>
    <scope>FUNCTION</scope>
    <scope>LACK OF NUCLEOTIDE PYROPHOSPHATASE AND LYSOPHOLIPASE D ACTIVITY</scope>
    <scope>TISSUE SPECIFICITY</scope>
    <scope>GLYCOSYLATION</scope>
    <source>
        <tissue evidence="3">Brain</tissue>
    </source>
</reference>
<reference key="3">
    <citation type="submission" date="2007-09" db="UniProtKB">
        <authorList>
            <person name="Lubec G."/>
            <person name="Kang S.U."/>
            <person name="Lubec S."/>
        </authorList>
    </citation>
    <scope>PROTEIN SEQUENCE OF 30-45; 103-115; 215-220 AND 394-405</scope>
    <scope>IDENTIFICATION BY MASS SPECTROMETRY</scope>
    <source>
        <strain>Sprague-Dawley</strain>
        <tissue>Brain</tissue>
    </source>
</reference>
<organism>
    <name type="scientific">Rattus norvegicus</name>
    <name type="common">Rat</name>
    <dbReference type="NCBI Taxonomy" id="10116"/>
    <lineage>
        <taxon>Eukaryota</taxon>
        <taxon>Metazoa</taxon>
        <taxon>Chordata</taxon>
        <taxon>Craniata</taxon>
        <taxon>Vertebrata</taxon>
        <taxon>Euteleostomi</taxon>
        <taxon>Mammalia</taxon>
        <taxon>Eutheria</taxon>
        <taxon>Euarchontoglires</taxon>
        <taxon>Glires</taxon>
        <taxon>Rodentia</taxon>
        <taxon>Myomorpha</taxon>
        <taxon>Muroidea</taxon>
        <taxon>Muridae</taxon>
        <taxon>Murinae</taxon>
        <taxon>Rattus</taxon>
    </lineage>
</organism>
<proteinExistence type="evidence at protein level"/>
<sequence>MIPEFLVVSCTLAALCHSVPLSLQTEQQKVLVVSFDGFRWDYLYKVPTPHFHYVMKNGVHVKQVTNVFITKTYPNHYTLVTGLFAENHGIVANDMFDPVLNKSFSLEHMNIYDSKFWEEATPLWITNQRAGHASGAAMWPGTDVKIHESYPTHYLPYNESVSFEDRVAKIIEWFTAKDPINLGFLYWEEPDDTGHDVGPDSPLMGPVISDIDHKLGYLIKMLKKAKLWNNINLIVTSDHGMTQCSKERVIELDQYLDKEHYTLIDHSPVAAILPKEGKFNEVYDALANAHPNLTVYKKEEIPERWHYKHSDRVQPIVAVADEGWYILQNKSDEFLLGNHGYDNALAEMHPIFLAHGPAFRKNFTKEAMNSTDLYSLVCHLLNVTALPHNGSFRNVQDLLSSAAPKAIPYTQSTTLPLGSAKPGEYEQEESYPYYIGISLGSLIAIVFFVVLIKHLIRSQMHTLQYMQVEVAQPLLQA</sequence>
<gene>
    <name type="primary">Enpp5</name>
</gene>
<keyword id="KW-0903">Direct protein sequencing</keyword>
<keyword id="KW-0325">Glycoprotein</keyword>
<keyword id="KW-0378">Hydrolase</keyword>
<keyword id="KW-0472">Membrane</keyword>
<keyword id="KW-0479">Metal-binding</keyword>
<keyword id="KW-1185">Reference proteome</keyword>
<keyword id="KW-0732">Signal</keyword>
<keyword id="KW-0812">Transmembrane</keyword>
<keyword id="KW-1133">Transmembrane helix</keyword>
<keyword id="KW-0862">Zinc</keyword>